<gene>
    <name type="primary">H2-Aa</name>
</gene>
<reference key="1">
    <citation type="journal article" date="1988" name="Immunogenetics">
        <title>Signaling to a B-cell clone by Ek, but not Ak, does not reflect alteration of Ak genes.</title>
        <authorList>
            <person name="Bishop G.A."/>
            <person name="McMillan M.S."/>
            <person name="Haughton G."/>
            <person name="Frelinger J.A."/>
        </authorList>
    </citation>
    <scope>NUCLEOTIDE SEQUENCE [MRNA]</scope>
</reference>
<reference key="2">
    <citation type="journal article" date="1983" name="Proc. Natl. Acad. Sci. U.S.A.">
        <title>The murine Ia alpha chains, E alpha and A alpha, show a surprising degree of sequence homology.</title>
        <authorList>
            <person name="Benoist C.O."/>
            <person name="Mathis D.J."/>
            <person name="Kanter M.R."/>
            <person name="Williams V.E."/>
            <person name="McDevitt H.O."/>
        </authorList>
    </citation>
    <scope>NUCLEOTIDE SEQUENCE [MRNA]</scope>
</reference>
<reference key="3">
    <citation type="journal article" date="1987" name="Immunol. Invest.">
        <title>Comparative sequence analysis of cDNA clones encoding I-A molecules of the CH12 B cell lymphoma: nucleotide differences do not account for their 'defective' function in B cell stimulation.</title>
        <authorList>
            <person name="Sharma S."/>
            <person name="King L.B."/>
            <person name="Corley R.B."/>
            <person name="Maki R."/>
        </authorList>
    </citation>
    <scope>NUCLEOTIDE SEQUENCE [MRNA] OF 16-256</scope>
</reference>
<reference key="4">
    <citation type="journal article" date="1985" name="Proc. Natl. Acad. Sci. U.S.A.">
        <title>A molecular basis for the Ia.2 and Ia.19 antigenic determinants.</title>
        <authorList>
            <person name="Landais D."/>
            <person name="Matthes H."/>
            <person name="Benoist C."/>
            <person name="Mathis D."/>
        </authorList>
    </citation>
    <scope>NUCLEOTIDE SEQUENCE [MRNA] OF 24-256</scope>
</reference>
<reference key="5">
    <citation type="journal article" date="1985" name="J. Biol. Chem.">
        <title>Oligosaccharide microheterogeneity of the murine major histocompatibility antigens. Reproducible site-specific patterns of sialylation and branching in asparagine-linked oligosaccharides.</title>
        <authorList>
            <person name="Swiedler S.J."/>
            <person name="Freed J.H."/>
            <person name="Tarentino A.L."/>
            <person name="Plummer T.H. Jr."/>
            <person name="Hart G.W."/>
        </authorList>
    </citation>
    <scope>GLYCOSYLATION AT ASN-105 AND ASN-145</scope>
</reference>
<reference key="6">
    <citation type="journal article" date="2010" name="Cell">
        <title>A tissue-specific atlas of mouse protein phosphorylation and expression.</title>
        <authorList>
            <person name="Huttlin E.L."/>
            <person name="Jedrychowski M.P."/>
            <person name="Elias J.E."/>
            <person name="Goswami T."/>
            <person name="Rad R."/>
            <person name="Beausoleil S.A."/>
            <person name="Villen J."/>
            <person name="Haas W."/>
            <person name="Sowa M.E."/>
            <person name="Gygi S.P."/>
        </authorList>
    </citation>
    <scope>IDENTIFICATION BY MASS SPECTROMETRY [LARGE SCALE ANALYSIS]</scope>
    <source>
        <tissue>Heart</tissue>
        <tissue>Kidney</tissue>
        <tissue>Lung</tissue>
        <tissue>Spleen</tissue>
    </source>
</reference>
<reference key="7">
    <citation type="journal article" date="1998" name="Immunity">
        <title>Crystal structure of I-Ak in complex with a dominant epitope of lysozyme.</title>
        <authorList>
            <person name="Fremont D.H."/>
            <person name="Monnaie D."/>
            <person name="Nelson C.A."/>
            <person name="Hendrickson W.A."/>
            <person name="Unanue E.R."/>
        </authorList>
    </citation>
    <scope>X-RAY CRYSTALLOGRAPHY (1.9 ANGSTROMS) OF 27-208</scope>
</reference>
<sequence>MPRSRALILGVLALTTMLSLCGGEDDIEADHVGSYGITVYQSPGDIGQYTFEFDGDELFYVDLDKKETVWMLPEFAQLRRFEPQGGLQNIATGKHNLEILTKRSNSTPATNEAPQATVFPKSPVLLGQPNTLICFVDNIFPPVINITWLRNSKSVTDGVYETSFFVNRDYSFHKLSYLTFIPSDDDIYDCKVEHWGLEEPVLKHWEPEIPAPMSELTETVVCALGLSVGLVGIVVGTIFIIQGLRSGGTSRHPGPL</sequence>
<comment type="subcellular location">
    <subcellularLocation>
        <location evidence="5">Membrane</location>
        <topology evidence="5">Single-pass type I membrane protein</topology>
    </subcellularLocation>
</comment>
<comment type="similarity">
    <text evidence="5">Belongs to the MHC class II family.</text>
</comment>
<proteinExistence type="evidence at protein level"/>
<name>HA2K_MOUSE</name>
<protein>
    <recommendedName>
        <fullName>H-2 class II histocompatibility antigen, A-K alpha chain</fullName>
    </recommendedName>
</protein>
<organism>
    <name type="scientific">Mus musculus</name>
    <name type="common">Mouse</name>
    <dbReference type="NCBI Taxonomy" id="10090"/>
    <lineage>
        <taxon>Eukaryota</taxon>
        <taxon>Metazoa</taxon>
        <taxon>Chordata</taxon>
        <taxon>Craniata</taxon>
        <taxon>Vertebrata</taxon>
        <taxon>Euteleostomi</taxon>
        <taxon>Mammalia</taxon>
        <taxon>Eutheria</taxon>
        <taxon>Euarchontoglires</taxon>
        <taxon>Glires</taxon>
        <taxon>Rodentia</taxon>
        <taxon>Myomorpha</taxon>
        <taxon>Muroidea</taxon>
        <taxon>Muridae</taxon>
        <taxon>Murinae</taxon>
        <taxon>Mus</taxon>
        <taxon>Mus</taxon>
    </lineage>
</organism>
<evidence type="ECO:0000250" key="1"/>
<evidence type="ECO:0000255" key="2"/>
<evidence type="ECO:0000255" key="3">
    <source>
        <dbReference type="PROSITE-ProRule" id="PRU00114"/>
    </source>
</evidence>
<evidence type="ECO:0000269" key="4">
    <source>
    </source>
</evidence>
<evidence type="ECO:0000305" key="5"/>
<evidence type="ECO:0007829" key="6">
    <source>
        <dbReference type="PDB" id="1D9K"/>
    </source>
</evidence>
<evidence type="ECO:0007829" key="7">
    <source>
        <dbReference type="PDB" id="1IAK"/>
    </source>
</evidence>
<dbReference type="EMBL" id="M21931">
    <property type="protein sequence ID" value="AAA39636.1"/>
    <property type="molecule type" value="mRNA"/>
</dbReference>
<dbReference type="EMBL" id="V00832">
    <property type="protein sequence ID" value="CAA24215.1"/>
    <property type="molecule type" value="mRNA"/>
</dbReference>
<dbReference type="EMBL" id="M11357">
    <property type="protein sequence ID" value="AAA39613.1"/>
    <property type="molecule type" value="mRNA"/>
</dbReference>
<dbReference type="PIR" id="A02217">
    <property type="entry name" value="HLMSAA"/>
</dbReference>
<dbReference type="PIR" id="I54447">
    <property type="entry name" value="I54447"/>
</dbReference>
<dbReference type="PDB" id="1D9K">
    <property type="method" value="X-ray"/>
    <property type="resolution" value="3.20 A"/>
    <property type="chains" value="C/G=27-209"/>
</dbReference>
<dbReference type="PDB" id="1IAK">
    <property type="method" value="X-ray"/>
    <property type="resolution" value="1.90 A"/>
    <property type="chains" value="A=24-222"/>
</dbReference>
<dbReference type="PDB" id="1JL4">
    <property type="method" value="X-ray"/>
    <property type="resolution" value="4.30 A"/>
    <property type="chains" value="A=31-208"/>
</dbReference>
<dbReference type="PDBsum" id="1D9K"/>
<dbReference type="PDBsum" id="1IAK"/>
<dbReference type="PDBsum" id="1JL4"/>
<dbReference type="SMR" id="P01910"/>
<dbReference type="DIP" id="DIP-6133N"/>
<dbReference type="FunCoup" id="P01910">
    <property type="interactions" value="270"/>
</dbReference>
<dbReference type="IntAct" id="P01910">
    <property type="interactions" value="1"/>
</dbReference>
<dbReference type="MINT" id="P01910"/>
<dbReference type="GlyCosmos" id="P01910">
    <property type="glycosylation" value="2 sites, No reported glycans"/>
</dbReference>
<dbReference type="GlyGen" id="P01910">
    <property type="glycosylation" value="3 sites, 1 N-linked glycan (1 site), 1 O-linked glycan (1 site)"/>
</dbReference>
<dbReference type="iPTMnet" id="P01910"/>
<dbReference type="PhosphoSitePlus" id="P01910"/>
<dbReference type="PeptideAtlas" id="P01910"/>
<dbReference type="ProteomicsDB" id="269806"/>
<dbReference type="AGR" id="MGI:95895"/>
<dbReference type="MGI" id="MGI:95895">
    <property type="gene designation" value="H2-Aa"/>
</dbReference>
<dbReference type="InParanoid" id="P01910"/>
<dbReference type="OrthoDB" id="8925804at2759"/>
<dbReference type="Reactome" id="R-MMU-202424">
    <property type="pathway name" value="Downstream TCR signaling"/>
</dbReference>
<dbReference type="Reactome" id="R-MMU-202427">
    <property type="pathway name" value="Phosphorylation of CD3 and TCR zeta chains"/>
</dbReference>
<dbReference type="Reactome" id="R-MMU-202430">
    <property type="pathway name" value="Translocation of ZAP-70 to Immunological synapse"/>
</dbReference>
<dbReference type="Reactome" id="R-MMU-202433">
    <property type="pathway name" value="Generation of second messenger molecules"/>
</dbReference>
<dbReference type="Reactome" id="R-MMU-2132295">
    <property type="pathway name" value="MHC class II antigen presentation"/>
</dbReference>
<dbReference type="Reactome" id="R-MMU-389948">
    <property type="pathway name" value="Co-inhibition by PD-1"/>
</dbReference>
<dbReference type="ChiTaRS" id="H2-Aa">
    <property type="organism name" value="mouse"/>
</dbReference>
<dbReference type="EvolutionaryTrace" id="P01910"/>
<dbReference type="Proteomes" id="UP000000589">
    <property type="component" value="Unplaced"/>
</dbReference>
<dbReference type="RNAct" id="P01910">
    <property type="molecule type" value="protein"/>
</dbReference>
<dbReference type="GO" id="GO:0009897">
    <property type="term" value="C:external side of plasma membrane"/>
    <property type="evidence" value="ECO:0000314"/>
    <property type="project" value="MGI"/>
</dbReference>
<dbReference type="GO" id="GO:0005764">
    <property type="term" value="C:lysosome"/>
    <property type="evidence" value="ECO:0000314"/>
    <property type="project" value="MGI"/>
</dbReference>
<dbReference type="GO" id="GO:0042613">
    <property type="term" value="C:MHC class II protein complex"/>
    <property type="evidence" value="ECO:0000314"/>
    <property type="project" value="MGI"/>
</dbReference>
<dbReference type="GO" id="GO:0005886">
    <property type="term" value="C:plasma membrane"/>
    <property type="evidence" value="ECO:0000314"/>
    <property type="project" value="MGI"/>
</dbReference>
<dbReference type="GO" id="GO:0042605">
    <property type="term" value="F:peptide antigen binding"/>
    <property type="evidence" value="ECO:0000314"/>
    <property type="project" value="MGI"/>
</dbReference>
<dbReference type="GO" id="GO:0002250">
    <property type="term" value="P:adaptive immune response"/>
    <property type="evidence" value="ECO:0007669"/>
    <property type="project" value="UniProtKB-KW"/>
</dbReference>
<dbReference type="GO" id="GO:0019882">
    <property type="term" value="P:antigen processing and presentation"/>
    <property type="evidence" value="ECO:0000314"/>
    <property type="project" value="MGI"/>
</dbReference>
<dbReference type="GO" id="GO:0019886">
    <property type="term" value="P:antigen processing and presentation of exogenous peptide antigen via MHC class II"/>
    <property type="evidence" value="ECO:0000314"/>
    <property type="project" value="MGI"/>
</dbReference>
<dbReference type="GO" id="GO:0048002">
    <property type="term" value="P:antigen processing and presentation of peptide antigen"/>
    <property type="evidence" value="ECO:0000314"/>
    <property type="project" value="MGI"/>
</dbReference>
<dbReference type="GO" id="GO:0045582">
    <property type="term" value="P:positive regulation of T cell differentiation"/>
    <property type="evidence" value="ECO:0000314"/>
    <property type="project" value="MGI"/>
</dbReference>
<dbReference type="CDD" id="cd21006">
    <property type="entry name" value="IgC1_MHC_II_alpha_I-A"/>
    <property type="match status" value="1"/>
</dbReference>
<dbReference type="FunFam" id="2.60.40.10:FF:000280">
    <property type="entry name" value="HLA class II histocompatibility antigen, DR alpha chain"/>
    <property type="match status" value="1"/>
</dbReference>
<dbReference type="FunFam" id="3.10.320.10:FF:000002">
    <property type="entry name" value="HLA class II histocompatibility antigen, DR alpha chain"/>
    <property type="match status" value="1"/>
</dbReference>
<dbReference type="Gene3D" id="3.10.320.10">
    <property type="entry name" value="Class II Histocompatibility Antigen, M Beta Chain, Chain B, domain 1"/>
    <property type="match status" value="1"/>
</dbReference>
<dbReference type="Gene3D" id="2.60.40.10">
    <property type="entry name" value="Immunoglobulins"/>
    <property type="match status" value="1"/>
</dbReference>
<dbReference type="InterPro" id="IPR007110">
    <property type="entry name" value="Ig-like_dom"/>
</dbReference>
<dbReference type="InterPro" id="IPR036179">
    <property type="entry name" value="Ig-like_dom_sf"/>
</dbReference>
<dbReference type="InterPro" id="IPR013783">
    <property type="entry name" value="Ig-like_fold"/>
</dbReference>
<dbReference type="InterPro" id="IPR003006">
    <property type="entry name" value="Ig/MHC_CS"/>
</dbReference>
<dbReference type="InterPro" id="IPR003597">
    <property type="entry name" value="Ig_C1-set"/>
</dbReference>
<dbReference type="InterPro" id="IPR050160">
    <property type="entry name" value="MHC/Immunoglobulin"/>
</dbReference>
<dbReference type="InterPro" id="IPR011162">
    <property type="entry name" value="MHC_I/II-like_Ag-recog"/>
</dbReference>
<dbReference type="InterPro" id="IPR014745">
    <property type="entry name" value="MHC_II_a/b_N"/>
</dbReference>
<dbReference type="InterPro" id="IPR001003">
    <property type="entry name" value="MHC_II_a_N"/>
</dbReference>
<dbReference type="PANTHER" id="PTHR19944:SF59">
    <property type="entry name" value="HLA CLASS II HISTOCOMPATIBILITY ANTIGEN, DQ ALPHA 1 CHAIN"/>
    <property type="match status" value="1"/>
</dbReference>
<dbReference type="PANTHER" id="PTHR19944">
    <property type="entry name" value="MHC CLASS II-RELATED"/>
    <property type="match status" value="1"/>
</dbReference>
<dbReference type="Pfam" id="PF07654">
    <property type="entry name" value="C1-set"/>
    <property type="match status" value="1"/>
</dbReference>
<dbReference type="Pfam" id="PF00993">
    <property type="entry name" value="MHC_II_alpha"/>
    <property type="match status" value="1"/>
</dbReference>
<dbReference type="SMART" id="SM00407">
    <property type="entry name" value="IGc1"/>
    <property type="match status" value="1"/>
</dbReference>
<dbReference type="SMART" id="SM00920">
    <property type="entry name" value="MHC_II_alpha"/>
    <property type="match status" value="1"/>
</dbReference>
<dbReference type="SUPFAM" id="SSF48726">
    <property type="entry name" value="Immunoglobulin"/>
    <property type="match status" value="1"/>
</dbReference>
<dbReference type="SUPFAM" id="SSF54452">
    <property type="entry name" value="MHC antigen-recognition domain"/>
    <property type="match status" value="1"/>
</dbReference>
<dbReference type="PROSITE" id="PS50835">
    <property type="entry name" value="IG_LIKE"/>
    <property type="match status" value="1"/>
</dbReference>
<dbReference type="PROSITE" id="PS00290">
    <property type="entry name" value="IG_MHC"/>
    <property type="match status" value="1"/>
</dbReference>
<keyword id="KW-0002">3D-structure</keyword>
<keyword id="KW-1064">Adaptive immunity</keyword>
<keyword id="KW-1015">Disulfide bond</keyword>
<keyword id="KW-0325">Glycoprotein</keyword>
<keyword id="KW-0391">Immunity</keyword>
<keyword id="KW-0472">Membrane</keyword>
<keyword id="KW-0491">MHC II</keyword>
<keyword id="KW-1185">Reference proteome</keyword>
<keyword id="KW-0732">Signal</keyword>
<keyword id="KW-0812">Transmembrane</keyword>
<keyword id="KW-1133">Transmembrane helix</keyword>
<feature type="signal peptide" evidence="1">
    <location>
        <begin position="1"/>
        <end position="23"/>
    </location>
</feature>
<feature type="chain" id="PRO_0000018977" description="H-2 class II histocompatibility antigen, A-K alpha chain">
    <location>
        <begin position="24"/>
        <end position="256"/>
    </location>
</feature>
<feature type="topological domain" description="Extracellular" evidence="2">
    <location>
        <begin position="24"/>
        <end position="218"/>
    </location>
</feature>
<feature type="transmembrane region" description="Helical" evidence="2">
    <location>
        <begin position="219"/>
        <end position="241"/>
    </location>
</feature>
<feature type="topological domain" description="Cytoplasmic" evidence="2">
    <location>
        <begin position="242"/>
        <end position="256"/>
    </location>
</feature>
<feature type="domain" description="Ig-like C1-type">
    <location>
        <begin position="114"/>
        <end position="206"/>
    </location>
</feature>
<feature type="region of interest" description="Alpha-1">
    <location>
        <begin position="24"/>
        <end position="111"/>
    </location>
</feature>
<feature type="region of interest" description="Alpha-2">
    <location>
        <begin position="112"/>
        <end position="205"/>
    </location>
</feature>
<feature type="region of interest" description="Connecting peptide">
    <location>
        <begin position="206"/>
        <end position="218"/>
    </location>
</feature>
<feature type="glycosylation site" description="N-linked (GlcNAc...) asparagine" evidence="4">
    <location>
        <position position="105"/>
    </location>
</feature>
<feature type="glycosylation site" description="N-linked (GlcNAc...) asparagine" evidence="4">
    <location>
        <position position="145"/>
    </location>
</feature>
<feature type="disulfide bond" evidence="3">
    <location>
        <begin position="134"/>
        <end position="190"/>
    </location>
</feature>
<feature type="strand" evidence="7">
    <location>
        <begin position="30"/>
        <end position="42"/>
    </location>
</feature>
<feature type="turn" evidence="7">
    <location>
        <begin position="43"/>
        <end position="45"/>
    </location>
</feature>
<feature type="strand" evidence="7">
    <location>
        <begin position="46"/>
        <end position="53"/>
    </location>
</feature>
<feature type="strand" evidence="7">
    <location>
        <begin position="56"/>
        <end position="62"/>
    </location>
</feature>
<feature type="turn" evidence="7">
    <location>
        <begin position="63"/>
        <end position="66"/>
    </location>
</feature>
<feature type="strand" evidence="7">
    <location>
        <begin position="67"/>
        <end position="72"/>
    </location>
</feature>
<feature type="helix" evidence="7">
    <location>
        <begin position="73"/>
        <end position="77"/>
    </location>
</feature>
<feature type="helix" evidence="7">
    <location>
        <begin position="83"/>
        <end position="104"/>
    </location>
</feature>
<feature type="strand" evidence="7">
    <location>
        <begin position="115"/>
        <end position="122"/>
    </location>
</feature>
<feature type="strand" evidence="6">
    <location>
        <begin position="126"/>
        <end position="128"/>
    </location>
</feature>
<feature type="strand" evidence="7">
    <location>
        <begin position="130"/>
        <end position="139"/>
    </location>
</feature>
<feature type="strand" evidence="7">
    <location>
        <begin position="145"/>
        <end position="150"/>
    </location>
</feature>
<feature type="strand" evidence="6">
    <location>
        <begin position="152"/>
        <end position="155"/>
    </location>
</feature>
<feature type="strand" evidence="7">
    <location>
        <begin position="159"/>
        <end position="161"/>
    </location>
</feature>
<feature type="strand" evidence="7">
    <location>
        <begin position="172"/>
        <end position="180"/>
    </location>
</feature>
<feature type="strand" evidence="7">
    <location>
        <begin position="188"/>
        <end position="193"/>
    </location>
</feature>
<feature type="strand" evidence="7">
    <location>
        <begin position="201"/>
        <end position="205"/>
    </location>
</feature>
<accession>P01910</accession>